<protein>
    <recommendedName>
        <fullName evidence="1">H(+)/Cl(-) exchange transporter ClcA</fullName>
    </recommendedName>
</protein>
<organism>
    <name type="scientific">Escherichia coli O1:K1 / APEC</name>
    <dbReference type="NCBI Taxonomy" id="405955"/>
    <lineage>
        <taxon>Bacteria</taxon>
        <taxon>Pseudomonadati</taxon>
        <taxon>Pseudomonadota</taxon>
        <taxon>Gammaproteobacteria</taxon>
        <taxon>Enterobacterales</taxon>
        <taxon>Enterobacteriaceae</taxon>
        <taxon>Escherichia</taxon>
    </lineage>
</organism>
<name>CLCA_ECOK1</name>
<comment type="function">
    <text evidence="1">Proton-coupled chloride transporter. Functions as antiport system and exchanges two chloride ions for 1 proton. Probably acts as an electrical shunt for an outwardly-directed proton pump that is linked to amino acid decarboxylation, as part of the extreme acid resistance (XAR) response.</text>
</comment>
<comment type="catalytic activity">
    <reaction evidence="1">
        <text>2 chloride(in) + H(+)(out) = 2 chloride(out) + H(+)(in)</text>
        <dbReference type="Rhea" id="RHEA:29567"/>
        <dbReference type="ChEBI" id="CHEBI:15378"/>
        <dbReference type="ChEBI" id="CHEBI:17996"/>
    </reaction>
</comment>
<comment type="subunit">
    <text evidence="1">Homodimer.</text>
</comment>
<comment type="subcellular location">
    <subcellularLocation>
        <location evidence="1">Cell inner membrane</location>
        <topology evidence="1">Multi-pass membrane protein</topology>
    </subcellularLocation>
</comment>
<comment type="similarity">
    <text evidence="1">Belongs to the chloride channel (TC 2.A.49) family. ClcA subfamily.</text>
</comment>
<gene>
    <name evidence="1" type="primary">clcA</name>
    <name evidence="1" type="synonym">eriC</name>
    <name type="ordered locus">Ecok1_01470</name>
    <name type="ORF">APECO1_1830</name>
</gene>
<reference key="1">
    <citation type="journal article" date="2007" name="J. Bacteriol.">
        <title>The genome sequence of avian pathogenic Escherichia coli strain O1:K1:H7 shares strong similarities with human extraintestinal pathogenic E. coli genomes.</title>
        <authorList>
            <person name="Johnson T.J."/>
            <person name="Kariyawasam S."/>
            <person name="Wannemuehler Y."/>
            <person name="Mangiamele P."/>
            <person name="Johnson S.J."/>
            <person name="Doetkott C."/>
            <person name="Skyberg J.A."/>
            <person name="Lynne A.M."/>
            <person name="Johnson J.R."/>
            <person name="Nolan L.K."/>
        </authorList>
    </citation>
    <scope>NUCLEOTIDE SEQUENCE [LARGE SCALE GENOMIC DNA]</scope>
</reference>
<keyword id="KW-0050">Antiport</keyword>
<keyword id="KW-0997">Cell inner membrane</keyword>
<keyword id="KW-1003">Cell membrane</keyword>
<keyword id="KW-0868">Chloride</keyword>
<keyword id="KW-0406">Ion transport</keyword>
<keyword id="KW-0472">Membrane</keyword>
<keyword id="KW-1185">Reference proteome</keyword>
<keyword id="KW-0812">Transmembrane</keyword>
<keyword id="KW-1133">Transmembrane helix</keyword>
<keyword id="KW-0813">Transport</keyword>
<sequence length="473" mass="50404">MKTDTPSLETPQAARLRRRQLIRQLLERDKTPLAILFMAAVVGTLVGLAAVAFDKGVAWLQNQRMGALVHTADNYPLLLTVAFLCSAVLAMFGYFLVRKYAPEAGGSGIPEIEGALEDQRPVRWWRVLPVKFFGGLGTLGGGMVLGREGPTVQIGGNIGRMVLDVFRLKGDEARHTLLATGAAAGLAAAFNAPLAGILFIIEEMRPQFRYTLISIKAVFIGVIMSTIMYRIFNHEVALIDVGKLSDAPLNTLWLYLILGIIFGIFGPIFNKWVLGMQDLLHRVHGGNITKWVLMGGAIGGLCGLLGFVAPATSGGGFNLIPIATAGNFSMGMLVFIFVARVITTLLCFSSGAPGGIFAPMLALGTVLGTAFGMVAVELFPQYHLEAGTFAIAGMGALLAASIRAPLTGIILVLEMTDNYQLILPMIITGLGATLLAQFTGGKPLYSAILARTLAKQEAEQLARSKAASARENT</sequence>
<dbReference type="EMBL" id="CP000468">
    <property type="protein sequence ID" value="ABI99640.1"/>
    <property type="molecule type" value="Genomic_DNA"/>
</dbReference>
<dbReference type="RefSeq" id="WP_000845407.1">
    <property type="nucleotide sequence ID" value="NZ_CADILS010000027.1"/>
</dbReference>
<dbReference type="SMR" id="A1A7K1"/>
<dbReference type="KEGG" id="ecv:APECO1_1830"/>
<dbReference type="HOGENOM" id="CLU_015263_7_0_6"/>
<dbReference type="Proteomes" id="UP000008216">
    <property type="component" value="Chromosome"/>
</dbReference>
<dbReference type="GO" id="GO:0005886">
    <property type="term" value="C:plasma membrane"/>
    <property type="evidence" value="ECO:0007669"/>
    <property type="project" value="UniProtKB-SubCell"/>
</dbReference>
<dbReference type="GO" id="GO:0015297">
    <property type="term" value="F:antiporter activity"/>
    <property type="evidence" value="ECO:0007669"/>
    <property type="project" value="UniProtKB-UniRule"/>
</dbReference>
<dbReference type="GO" id="GO:0005247">
    <property type="term" value="F:voltage-gated chloride channel activity"/>
    <property type="evidence" value="ECO:0007669"/>
    <property type="project" value="TreeGrafter"/>
</dbReference>
<dbReference type="CDD" id="cd01031">
    <property type="entry name" value="EriC"/>
    <property type="match status" value="1"/>
</dbReference>
<dbReference type="FunFam" id="1.10.3080.10:FF:000005">
    <property type="entry name" value="H(+)/Cl(-) exchange transporter ClcA"/>
    <property type="match status" value="1"/>
</dbReference>
<dbReference type="Gene3D" id="1.10.3080.10">
    <property type="entry name" value="Clc chloride channel"/>
    <property type="match status" value="1"/>
</dbReference>
<dbReference type="HAMAP" id="MF_01128">
    <property type="entry name" value="CLC_ClcA"/>
    <property type="match status" value="1"/>
</dbReference>
<dbReference type="InterPro" id="IPR023861">
    <property type="entry name" value="Cl-channel_ClcA"/>
</dbReference>
<dbReference type="InterPro" id="IPR014743">
    <property type="entry name" value="Cl-channel_core"/>
</dbReference>
<dbReference type="InterPro" id="IPR001807">
    <property type="entry name" value="ClC"/>
</dbReference>
<dbReference type="NCBIfam" id="NF003640">
    <property type="entry name" value="PRK05277.1"/>
    <property type="match status" value="1"/>
</dbReference>
<dbReference type="PANTHER" id="PTHR45711">
    <property type="entry name" value="CHLORIDE CHANNEL PROTEIN"/>
    <property type="match status" value="1"/>
</dbReference>
<dbReference type="PANTHER" id="PTHR45711:SF6">
    <property type="entry name" value="CHLORIDE CHANNEL PROTEIN"/>
    <property type="match status" value="1"/>
</dbReference>
<dbReference type="Pfam" id="PF00654">
    <property type="entry name" value="Voltage_CLC"/>
    <property type="match status" value="1"/>
</dbReference>
<dbReference type="PRINTS" id="PR00762">
    <property type="entry name" value="CLCHANNEL"/>
</dbReference>
<dbReference type="SUPFAM" id="SSF81340">
    <property type="entry name" value="Clc chloride channel"/>
    <property type="match status" value="1"/>
</dbReference>
<accession>A1A7K1</accession>
<evidence type="ECO:0000255" key="1">
    <source>
        <dbReference type="HAMAP-Rule" id="MF_01128"/>
    </source>
</evidence>
<feature type="chain" id="PRO_0000301539" description="H(+)/Cl(-) exchange transporter ClcA">
    <location>
        <begin position="1"/>
        <end position="473"/>
    </location>
</feature>
<feature type="topological domain" description="Cytoplasmic" evidence="1">
    <location>
        <begin position="1"/>
        <end position="32"/>
    </location>
</feature>
<feature type="transmembrane region" description="Helical" evidence="1">
    <location>
        <begin position="33"/>
        <end position="69"/>
    </location>
</feature>
<feature type="topological domain" description="Periplasmic" evidence="1">
    <location>
        <begin position="70"/>
        <end position="76"/>
    </location>
</feature>
<feature type="transmembrane region" description="Helical" evidence="1">
    <location>
        <begin position="77"/>
        <end position="100"/>
    </location>
</feature>
<feature type="intramembrane region" description="Helical" evidence="1">
    <location>
        <begin position="109"/>
        <end position="116"/>
    </location>
</feature>
<feature type="topological domain" description="Cytoplasmic" evidence="1">
    <location>
        <begin position="117"/>
        <end position="123"/>
    </location>
</feature>
<feature type="transmembrane region" description="Helical" evidence="1">
    <location>
        <begin position="124"/>
        <end position="141"/>
    </location>
</feature>
<feature type="transmembrane region" description="Helical" evidence="1">
    <location>
        <begin position="148"/>
        <end position="166"/>
    </location>
</feature>
<feature type="topological domain" description="Cytoplasmic" evidence="1">
    <location>
        <begin position="167"/>
        <end position="176"/>
    </location>
</feature>
<feature type="intramembrane region" description="Helical" evidence="1">
    <location>
        <begin position="177"/>
        <end position="189"/>
    </location>
</feature>
<feature type="intramembrane region" description="Helical" evidence="1">
    <location>
        <begin position="193"/>
        <end position="201"/>
    </location>
</feature>
<feature type="topological domain" description="Cytoplasmic" evidence="1">
    <location>
        <begin position="202"/>
        <end position="214"/>
    </location>
</feature>
<feature type="transmembrane region" description="Helical" evidence="1">
    <location>
        <begin position="215"/>
        <end position="232"/>
    </location>
</feature>
<feature type="topological domain" description="Periplasmic" evidence="1">
    <location>
        <begin position="233"/>
        <end position="252"/>
    </location>
</feature>
<feature type="transmembrane region" description="Helical" evidence="1">
    <location>
        <begin position="253"/>
        <end position="281"/>
    </location>
</feature>
<feature type="topological domain" description="Cytoplasmic" evidence="1">
    <location>
        <begin position="282"/>
        <end position="287"/>
    </location>
</feature>
<feature type="transmembrane region" description="Helical" evidence="1">
    <location>
        <begin position="288"/>
        <end position="309"/>
    </location>
</feature>
<feature type="topological domain" description="Periplasmic" evidence="1">
    <location>
        <begin position="310"/>
        <end position="329"/>
    </location>
</feature>
<feature type="transmembrane region" description="Helical" evidence="1">
    <location>
        <begin position="330"/>
        <end position="349"/>
    </location>
</feature>
<feature type="transmembrane region" description="Helical" evidence="1">
    <location>
        <begin position="355"/>
        <end position="376"/>
    </location>
</feature>
<feature type="topological domain" description="Periplasmic" evidence="1">
    <location>
        <begin position="377"/>
        <end position="386"/>
    </location>
</feature>
<feature type="intramembrane region" description="Helical" evidence="1">
    <location>
        <begin position="387"/>
        <end position="401"/>
    </location>
</feature>
<feature type="intramembrane region" description="Note=Loop between two helices" evidence="1">
    <location>
        <begin position="402"/>
        <end position="404"/>
    </location>
</feature>
<feature type="intramembrane region" description="Helical" evidence="1">
    <location>
        <begin position="405"/>
        <end position="416"/>
    </location>
</feature>
<feature type="intramembrane region" description="Note=Loop between two helices" evidence="1">
    <location>
        <begin position="417"/>
        <end position="421"/>
    </location>
</feature>
<feature type="transmembrane region" description="Helical" evidence="1">
    <location>
        <begin position="422"/>
        <end position="438"/>
    </location>
</feature>
<feature type="topological domain" description="Cytoplasmic" evidence="1">
    <location>
        <begin position="439"/>
        <end position="473"/>
    </location>
</feature>
<feature type="short sequence motif" description="Selectivity filter part_1" evidence="1">
    <location>
        <begin position="106"/>
        <end position="110"/>
    </location>
</feature>
<feature type="short sequence motif" description="Selectivity filter part_2" evidence="1">
    <location>
        <begin position="146"/>
        <end position="150"/>
    </location>
</feature>
<feature type="short sequence motif" description="Selectivity filter part_3" evidence="1">
    <location>
        <begin position="355"/>
        <end position="359"/>
    </location>
</feature>
<feature type="binding site" evidence="1">
    <location>
        <position position="107"/>
    </location>
    <ligand>
        <name>chloride</name>
        <dbReference type="ChEBI" id="CHEBI:17996"/>
    </ligand>
</feature>
<feature type="binding site" evidence="1">
    <location>
        <position position="356"/>
    </location>
    <ligand>
        <name>chloride</name>
        <dbReference type="ChEBI" id="CHEBI:17996"/>
    </ligand>
</feature>
<feature type="binding site" evidence="1">
    <location>
        <position position="357"/>
    </location>
    <ligand>
        <name>chloride</name>
        <dbReference type="ChEBI" id="CHEBI:17996"/>
    </ligand>
</feature>
<feature type="binding site" evidence="1">
    <location>
        <position position="445"/>
    </location>
    <ligand>
        <name>chloride</name>
        <dbReference type="ChEBI" id="CHEBI:17996"/>
    </ligand>
</feature>
<feature type="site" description="Mediates proton transfer from the outer aqueous phase to the interior of the protein; involved in linking H(+) and Cl(-) transport" evidence="1">
    <location>
        <position position="148"/>
    </location>
</feature>
<feature type="site" description="Mediates proton transfer from the protein to the inner aqueous phase" evidence="1">
    <location>
        <position position="203"/>
    </location>
</feature>
<proteinExistence type="inferred from homology"/>